<protein>
    <recommendedName>
        <fullName>WD repeat-containing protein 1</fullName>
    </recommendedName>
    <alternativeName>
        <fullName>Actin-interacting protein 1</fullName>
        <shortName>AIP1</shortName>
    </alternativeName>
</protein>
<keyword id="KW-0009">Actin-binding</keyword>
<keyword id="KW-1003">Cell membrane</keyword>
<keyword id="KW-0963">Cytoplasm</keyword>
<keyword id="KW-0206">Cytoskeleton</keyword>
<keyword id="KW-0472">Membrane</keyword>
<keyword id="KW-0539">Nucleus</keyword>
<keyword id="KW-1185">Reference proteome</keyword>
<keyword id="KW-0677">Repeat</keyword>
<keyword id="KW-0853">WD repeat</keyword>
<accession>Q6DIF4</accession>
<dbReference type="EMBL" id="BC075588">
    <property type="protein sequence ID" value="AAH75588.1"/>
    <property type="molecule type" value="mRNA"/>
</dbReference>
<dbReference type="RefSeq" id="NP_001006781.1">
    <property type="nucleotide sequence ID" value="NM_001006780.1"/>
</dbReference>
<dbReference type="SMR" id="Q6DIF4"/>
<dbReference type="FunCoup" id="Q6DIF4">
    <property type="interactions" value="1790"/>
</dbReference>
<dbReference type="STRING" id="8364.ENSXETP00000025497"/>
<dbReference type="PaxDb" id="8364-ENSXETP00000064033"/>
<dbReference type="DNASU" id="448473"/>
<dbReference type="GeneID" id="448473"/>
<dbReference type="KEGG" id="xtr:448473"/>
<dbReference type="AGR" id="Xenbase:XB-GENE-489897"/>
<dbReference type="CTD" id="9948"/>
<dbReference type="Xenbase" id="XB-GENE-489897">
    <property type="gene designation" value="wdr1"/>
</dbReference>
<dbReference type="eggNOG" id="KOG0318">
    <property type="taxonomic scope" value="Eukaryota"/>
</dbReference>
<dbReference type="InParanoid" id="Q6DIF4"/>
<dbReference type="OMA" id="FYQGPPF"/>
<dbReference type="OrthoDB" id="2306at2759"/>
<dbReference type="Reactome" id="R-XTR-114608">
    <property type="pathway name" value="Platelet degranulation"/>
</dbReference>
<dbReference type="Proteomes" id="UP000008143">
    <property type="component" value="Chromosome 1"/>
</dbReference>
<dbReference type="GO" id="GO:0005884">
    <property type="term" value="C:actin filament"/>
    <property type="evidence" value="ECO:0000250"/>
    <property type="project" value="UniProtKB"/>
</dbReference>
<dbReference type="GO" id="GO:0005737">
    <property type="term" value="C:cytoplasm"/>
    <property type="evidence" value="ECO:0000250"/>
    <property type="project" value="UniProtKB"/>
</dbReference>
<dbReference type="GO" id="GO:0005634">
    <property type="term" value="C:nucleus"/>
    <property type="evidence" value="ECO:0000250"/>
    <property type="project" value="UniProtKB"/>
</dbReference>
<dbReference type="GO" id="GO:0005886">
    <property type="term" value="C:plasma membrane"/>
    <property type="evidence" value="ECO:0000250"/>
    <property type="project" value="UniProtKB"/>
</dbReference>
<dbReference type="GO" id="GO:0003779">
    <property type="term" value="F:actin binding"/>
    <property type="evidence" value="ECO:0000250"/>
    <property type="project" value="UniProtKB"/>
</dbReference>
<dbReference type="GO" id="GO:0051015">
    <property type="term" value="F:actin filament binding"/>
    <property type="evidence" value="ECO:0000250"/>
    <property type="project" value="UniProtKB"/>
</dbReference>
<dbReference type="GO" id="GO:0030043">
    <property type="term" value="P:actin filament fragmentation"/>
    <property type="evidence" value="ECO:0000250"/>
    <property type="project" value="UniProtKB"/>
</dbReference>
<dbReference type="CDD" id="cd00200">
    <property type="entry name" value="WD40"/>
    <property type="match status" value="1"/>
</dbReference>
<dbReference type="FunFam" id="2.130.10.10:FF:000097">
    <property type="entry name" value="WD repeat domain 1"/>
    <property type="match status" value="1"/>
</dbReference>
<dbReference type="FunFam" id="2.130.10.10:FF:000203">
    <property type="entry name" value="WD repeat domain 1"/>
    <property type="match status" value="1"/>
</dbReference>
<dbReference type="Gene3D" id="2.130.10.10">
    <property type="entry name" value="YVTN repeat-like/Quinoprotein amine dehydrogenase"/>
    <property type="match status" value="2"/>
</dbReference>
<dbReference type="InterPro" id="IPR020472">
    <property type="entry name" value="G-protein_beta_WD-40_rep"/>
</dbReference>
<dbReference type="InterPro" id="IPR011045">
    <property type="entry name" value="N2O_reductase_N"/>
</dbReference>
<dbReference type="InterPro" id="IPR015943">
    <property type="entry name" value="WD40/YVTN_repeat-like_dom_sf"/>
</dbReference>
<dbReference type="InterPro" id="IPR019775">
    <property type="entry name" value="WD40_repeat_CS"/>
</dbReference>
<dbReference type="InterPro" id="IPR036322">
    <property type="entry name" value="WD40_repeat_dom_sf"/>
</dbReference>
<dbReference type="InterPro" id="IPR001680">
    <property type="entry name" value="WD40_rpt"/>
</dbReference>
<dbReference type="PANTHER" id="PTHR19856:SF0">
    <property type="entry name" value="WD REPEAT-CONTAINING PROTEIN 1"/>
    <property type="match status" value="1"/>
</dbReference>
<dbReference type="PANTHER" id="PTHR19856">
    <property type="entry name" value="WD-REPEATCONTAINING PROTEIN WDR1"/>
    <property type="match status" value="1"/>
</dbReference>
<dbReference type="Pfam" id="PF00400">
    <property type="entry name" value="WD40"/>
    <property type="match status" value="6"/>
</dbReference>
<dbReference type="PRINTS" id="PR00320">
    <property type="entry name" value="GPROTEINBRPT"/>
</dbReference>
<dbReference type="SMART" id="SM00320">
    <property type="entry name" value="WD40"/>
    <property type="match status" value="11"/>
</dbReference>
<dbReference type="SUPFAM" id="SSF50974">
    <property type="entry name" value="Nitrous oxide reductase, N-terminal domain"/>
    <property type="match status" value="1"/>
</dbReference>
<dbReference type="SUPFAM" id="SSF50978">
    <property type="entry name" value="WD40 repeat-like"/>
    <property type="match status" value="1"/>
</dbReference>
<dbReference type="PROSITE" id="PS00678">
    <property type="entry name" value="WD_REPEATS_1"/>
    <property type="match status" value="1"/>
</dbReference>
<dbReference type="PROSITE" id="PS50082">
    <property type="entry name" value="WD_REPEATS_2"/>
    <property type="match status" value="5"/>
</dbReference>
<dbReference type="PROSITE" id="PS50294">
    <property type="entry name" value="WD_REPEATS_REGION"/>
    <property type="match status" value="1"/>
</dbReference>
<proteinExistence type="evidence at transcript level"/>
<comment type="function">
    <text evidence="2">Induces disassembly of actin filaments in conjunction with ADF/cofilin family proteins. Doesn't sever actin filaments alone, but caps the barbed ends of filaments severed by cofilin, which blocks annealing and depolymerization and allows more extensive severing by cofilin (By similarity).</text>
</comment>
<comment type="subcellular location">
    <subcellularLocation>
        <location evidence="2">Cell membrane</location>
    </subcellularLocation>
    <subcellularLocation>
        <location evidence="1">Cytoplasm</location>
        <location evidence="1">Cytoskeleton</location>
    </subcellularLocation>
    <subcellularLocation>
        <location evidence="2">Nucleus</location>
    </subcellularLocation>
</comment>
<comment type="similarity">
    <text evidence="3">Belongs to the WD repeat AIP1 family.</text>
</comment>
<feature type="chain" id="PRO_0000289069" description="WD repeat-containing protein 1">
    <location>
        <begin position="1"/>
        <end position="607"/>
    </location>
</feature>
<feature type="repeat" description="WD 1" evidence="3">
    <location>
        <begin position="4"/>
        <end position="45"/>
    </location>
</feature>
<feature type="repeat" description="WD 2" evidence="3">
    <location>
        <begin position="48"/>
        <end position="87"/>
    </location>
</feature>
<feature type="repeat" description="WD 3" evidence="3">
    <location>
        <begin position="93"/>
        <end position="135"/>
    </location>
</feature>
<feature type="repeat" description="WD 4" evidence="3">
    <location>
        <begin position="138"/>
        <end position="176"/>
    </location>
</feature>
<feature type="repeat" description="WD 5" evidence="3">
    <location>
        <begin position="180"/>
        <end position="218"/>
    </location>
</feature>
<feature type="repeat" description="WD 6" evidence="3">
    <location>
        <begin position="224"/>
        <end position="263"/>
    </location>
</feature>
<feature type="repeat" description="WD 7" evidence="3">
    <location>
        <begin position="270"/>
        <end position="306"/>
    </location>
</feature>
<feature type="repeat" description="WD 8" evidence="3">
    <location>
        <begin position="311"/>
        <end position="351"/>
    </location>
</feature>
<feature type="repeat" description="WD 9" evidence="3">
    <location>
        <begin position="358"/>
        <end position="408"/>
    </location>
</feature>
<feature type="repeat" description="WD 10" evidence="3">
    <location>
        <begin position="432"/>
        <end position="474"/>
    </location>
</feature>
<feature type="repeat" description="WD 11" evidence="3">
    <location>
        <begin position="480"/>
        <end position="518"/>
    </location>
</feature>
<feature type="repeat" description="WD 12" evidence="3">
    <location>
        <begin position="523"/>
        <end position="561"/>
    </location>
</feature>
<feature type="repeat" description="WD 13" evidence="3">
    <location>
        <begin position="566"/>
        <end position="604"/>
    </location>
</feature>
<name>WDR1_XENTR</name>
<reference evidence="4" key="1">
    <citation type="submission" date="2004-06" db="EMBL/GenBank/DDBJ databases">
        <authorList>
            <consortium name="NIH - Xenopus Gene Collection (XGC) project"/>
        </authorList>
    </citation>
    <scope>NUCLEOTIDE SEQUENCE [LARGE SCALE MRNA]</scope>
    <source>
        <tissue evidence="4">Neurula</tissue>
    </source>
</reference>
<organism>
    <name type="scientific">Xenopus tropicalis</name>
    <name type="common">Western clawed frog</name>
    <name type="synonym">Silurana tropicalis</name>
    <dbReference type="NCBI Taxonomy" id="8364"/>
    <lineage>
        <taxon>Eukaryota</taxon>
        <taxon>Metazoa</taxon>
        <taxon>Chordata</taxon>
        <taxon>Craniata</taxon>
        <taxon>Vertebrata</taxon>
        <taxon>Euteleostomi</taxon>
        <taxon>Amphibia</taxon>
        <taxon>Batrachia</taxon>
        <taxon>Anura</taxon>
        <taxon>Pipoidea</taxon>
        <taxon>Pipidae</taxon>
        <taxon>Xenopodinae</taxon>
        <taxon>Xenopus</taxon>
        <taxon>Silurana</taxon>
    </lineage>
</organism>
<gene>
    <name evidence="4" type="primary">wdr1</name>
    <name evidence="2" type="synonym">aip1</name>
</gene>
<sequence>MPYELKKVFASLPQVERGVAKIITGDPKGNNFLYTNGKSVIIRNIENPAIADIYTEHAHPVVVARYAPSGFYIASGDTSGKLRIWDTTQKEHLLKYEYQPFAGKIKDIAWTEDSKRIAVVGEGREKFGSVFLWDTGSSVGEISGNIKVINSVDIKQTRPYRLVTGSDDNCCAFFEGPPFKFKFTMADHSRFVNCVRFSPDGSRLASAGADGQIFLYDGKTGEKVGNLGGSKAHDGGIYAVSWSADSTQLLSASGDKTAKIWDVAANSAVTTFHLGTEVLDQQLGCLWQKDYLLSVSLSGYINYLDKNNPSRPLRVIKGHNKSIQCMTVHNSDGRSTIYTGSHDGHINYWDAETGENDTFTGKGHTNQVSRMDLDSSNQLITCSMDDTVRYTSLTSKDYSSSESVKMDVQPKCVAVGSGGYVVTLCIGQIVLLKDKKKVFAIDSLDYEPEAVAIHKGSGTVAVGGVDGNVHLYSIQGNSLKDEGKSLPVKGAVTDLAYSHDGAFLAVTDANKVVTVFNVADGYSEQNVYYGHHAKAVSVAWSPDNEHFASSGMDMMVYVWTLSDPDARIKIPDAHRLHHVSSLAWLDEHTLATVSHDACVKQWTVTFK</sequence>
<evidence type="ECO:0000250" key="1"/>
<evidence type="ECO:0000250" key="2">
    <source>
        <dbReference type="UniProtKB" id="Q9W7F2"/>
    </source>
</evidence>
<evidence type="ECO:0000255" key="3"/>
<evidence type="ECO:0000312" key="4">
    <source>
        <dbReference type="EMBL" id="AAH75588.1"/>
    </source>
</evidence>